<reference key="1">
    <citation type="journal article" date="2004" name="Proc. Natl. Acad. Sci. U.S.A.">
        <title>Genome sequence of the deep-sea gamma-proteobacterium Idiomarina loihiensis reveals amino acid fermentation as a source of carbon and energy.</title>
        <authorList>
            <person name="Hou S."/>
            <person name="Saw J.H."/>
            <person name="Lee K.S."/>
            <person name="Freitas T.A."/>
            <person name="Belisle C."/>
            <person name="Kawarabayasi Y."/>
            <person name="Donachie S.P."/>
            <person name="Pikina A."/>
            <person name="Galperin M.Y."/>
            <person name="Koonin E.V."/>
            <person name="Makarova K.S."/>
            <person name="Omelchenko M.V."/>
            <person name="Sorokin A."/>
            <person name="Wolf Y.I."/>
            <person name="Li Q.X."/>
            <person name="Keum Y.S."/>
            <person name="Campbell S."/>
            <person name="Denery J."/>
            <person name="Aizawa S."/>
            <person name="Shibata S."/>
            <person name="Malahoff A."/>
            <person name="Alam M."/>
        </authorList>
    </citation>
    <scope>NUCLEOTIDE SEQUENCE [LARGE SCALE GENOMIC DNA]</scope>
    <source>
        <strain>ATCC BAA-735 / DSM 15497 / L2-TR</strain>
    </source>
</reference>
<sequence>MKLRPLHDRVIIKRTEVEAKSAGGIVLTGSAAEKSTRGEIVAVGKGRILDNGEVRALDVKAGDKVLFNEGYGVKTEKIDGEEYLIMSESDILAVEE</sequence>
<dbReference type="EMBL" id="AE017340">
    <property type="protein sequence ID" value="AAV83113.1"/>
    <property type="molecule type" value="Genomic_DNA"/>
</dbReference>
<dbReference type="RefSeq" id="WP_011235507.1">
    <property type="nucleotide sequence ID" value="NC_006512.1"/>
</dbReference>
<dbReference type="SMR" id="Q5QVT3"/>
<dbReference type="STRING" id="283942.IL2281"/>
<dbReference type="GeneID" id="41337475"/>
<dbReference type="KEGG" id="ilo:IL2281"/>
<dbReference type="eggNOG" id="COG0234">
    <property type="taxonomic scope" value="Bacteria"/>
</dbReference>
<dbReference type="HOGENOM" id="CLU_132825_1_1_6"/>
<dbReference type="OrthoDB" id="9806791at2"/>
<dbReference type="Proteomes" id="UP000001171">
    <property type="component" value="Chromosome"/>
</dbReference>
<dbReference type="GO" id="GO:0005737">
    <property type="term" value="C:cytoplasm"/>
    <property type="evidence" value="ECO:0007669"/>
    <property type="project" value="UniProtKB-SubCell"/>
</dbReference>
<dbReference type="GO" id="GO:0005524">
    <property type="term" value="F:ATP binding"/>
    <property type="evidence" value="ECO:0007669"/>
    <property type="project" value="InterPro"/>
</dbReference>
<dbReference type="GO" id="GO:0046872">
    <property type="term" value="F:metal ion binding"/>
    <property type="evidence" value="ECO:0007669"/>
    <property type="project" value="TreeGrafter"/>
</dbReference>
<dbReference type="GO" id="GO:0044183">
    <property type="term" value="F:protein folding chaperone"/>
    <property type="evidence" value="ECO:0007669"/>
    <property type="project" value="InterPro"/>
</dbReference>
<dbReference type="GO" id="GO:0051087">
    <property type="term" value="F:protein-folding chaperone binding"/>
    <property type="evidence" value="ECO:0007669"/>
    <property type="project" value="TreeGrafter"/>
</dbReference>
<dbReference type="GO" id="GO:0051082">
    <property type="term" value="F:unfolded protein binding"/>
    <property type="evidence" value="ECO:0007669"/>
    <property type="project" value="TreeGrafter"/>
</dbReference>
<dbReference type="GO" id="GO:0051085">
    <property type="term" value="P:chaperone cofactor-dependent protein refolding"/>
    <property type="evidence" value="ECO:0007669"/>
    <property type="project" value="TreeGrafter"/>
</dbReference>
<dbReference type="CDD" id="cd00320">
    <property type="entry name" value="cpn10"/>
    <property type="match status" value="1"/>
</dbReference>
<dbReference type="FunFam" id="2.30.33.40:FF:000001">
    <property type="entry name" value="10 kDa chaperonin"/>
    <property type="match status" value="1"/>
</dbReference>
<dbReference type="Gene3D" id="2.30.33.40">
    <property type="entry name" value="GroES chaperonin"/>
    <property type="match status" value="1"/>
</dbReference>
<dbReference type="HAMAP" id="MF_00580">
    <property type="entry name" value="CH10"/>
    <property type="match status" value="1"/>
</dbReference>
<dbReference type="InterPro" id="IPR020818">
    <property type="entry name" value="Chaperonin_GroES"/>
</dbReference>
<dbReference type="InterPro" id="IPR037124">
    <property type="entry name" value="Chaperonin_GroES_sf"/>
</dbReference>
<dbReference type="InterPro" id="IPR018369">
    <property type="entry name" value="Chaprnonin_Cpn10_CS"/>
</dbReference>
<dbReference type="InterPro" id="IPR011032">
    <property type="entry name" value="GroES-like_sf"/>
</dbReference>
<dbReference type="NCBIfam" id="NF001526">
    <property type="entry name" value="PRK00364.1-1"/>
    <property type="match status" value="1"/>
</dbReference>
<dbReference type="NCBIfam" id="NF001527">
    <property type="entry name" value="PRK00364.1-2"/>
    <property type="match status" value="1"/>
</dbReference>
<dbReference type="NCBIfam" id="NF001531">
    <property type="entry name" value="PRK00364.2-2"/>
    <property type="match status" value="1"/>
</dbReference>
<dbReference type="NCBIfam" id="NF001533">
    <property type="entry name" value="PRK00364.2-4"/>
    <property type="match status" value="1"/>
</dbReference>
<dbReference type="PANTHER" id="PTHR10772">
    <property type="entry name" value="10 KDA HEAT SHOCK PROTEIN"/>
    <property type="match status" value="1"/>
</dbReference>
<dbReference type="PANTHER" id="PTHR10772:SF58">
    <property type="entry name" value="CO-CHAPERONIN GROES"/>
    <property type="match status" value="1"/>
</dbReference>
<dbReference type="Pfam" id="PF00166">
    <property type="entry name" value="Cpn10"/>
    <property type="match status" value="1"/>
</dbReference>
<dbReference type="PRINTS" id="PR00297">
    <property type="entry name" value="CHAPERONIN10"/>
</dbReference>
<dbReference type="SMART" id="SM00883">
    <property type="entry name" value="Cpn10"/>
    <property type="match status" value="1"/>
</dbReference>
<dbReference type="SUPFAM" id="SSF50129">
    <property type="entry name" value="GroES-like"/>
    <property type="match status" value="1"/>
</dbReference>
<dbReference type="PROSITE" id="PS00681">
    <property type="entry name" value="CHAPERONINS_CPN10"/>
    <property type="match status" value="1"/>
</dbReference>
<name>CH10_IDILO</name>
<comment type="function">
    <text evidence="1">Together with the chaperonin GroEL, plays an essential role in assisting protein folding. The GroEL-GroES system forms a nano-cage that allows encapsulation of the non-native substrate proteins and provides a physical environment optimized to promote and accelerate protein folding. GroES binds to the apical surface of the GroEL ring, thereby capping the opening of the GroEL channel.</text>
</comment>
<comment type="subunit">
    <text evidence="1">Heptamer of 7 subunits arranged in a ring. Interacts with the chaperonin GroEL.</text>
</comment>
<comment type="subcellular location">
    <subcellularLocation>
        <location evidence="1">Cytoplasm</location>
    </subcellularLocation>
</comment>
<comment type="similarity">
    <text evidence="1">Belongs to the GroES chaperonin family.</text>
</comment>
<feature type="chain" id="PRO_1000025276" description="Co-chaperonin GroES">
    <location>
        <begin position="1"/>
        <end position="96"/>
    </location>
</feature>
<protein>
    <recommendedName>
        <fullName evidence="1">Co-chaperonin GroES</fullName>
    </recommendedName>
    <alternativeName>
        <fullName evidence="1">10 kDa chaperonin</fullName>
    </alternativeName>
    <alternativeName>
        <fullName evidence="1">Chaperonin-10</fullName>
        <shortName evidence="1">Cpn10</shortName>
    </alternativeName>
</protein>
<evidence type="ECO:0000255" key="1">
    <source>
        <dbReference type="HAMAP-Rule" id="MF_00580"/>
    </source>
</evidence>
<proteinExistence type="inferred from homology"/>
<organism>
    <name type="scientific">Idiomarina loihiensis (strain ATCC BAA-735 / DSM 15497 / L2-TR)</name>
    <dbReference type="NCBI Taxonomy" id="283942"/>
    <lineage>
        <taxon>Bacteria</taxon>
        <taxon>Pseudomonadati</taxon>
        <taxon>Pseudomonadota</taxon>
        <taxon>Gammaproteobacteria</taxon>
        <taxon>Alteromonadales</taxon>
        <taxon>Idiomarinaceae</taxon>
        <taxon>Idiomarina</taxon>
    </lineage>
</organism>
<gene>
    <name evidence="1" type="primary">groES</name>
    <name evidence="1" type="synonym">groS</name>
    <name type="ordered locus">IL2281</name>
</gene>
<keyword id="KW-0143">Chaperone</keyword>
<keyword id="KW-0963">Cytoplasm</keyword>
<keyword id="KW-1185">Reference proteome</keyword>
<accession>Q5QVT3</accession>